<evidence type="ECO:0000250" key="1">
    <source>
        <dbReference type="UniProtKB" id="Q06053"/>
    </source>
</evidence>
<evidence type="ECO:0000250" key="2">
    <source>
        <dbReference type="UniProtKB" id="Q5SMC7"/>
    </source>
</evidence>
<evidence type="ECO:0000250" key="3">
    <source>
        <dbReference type="UniProtKB" id="Q9UTH9"/>
    </source>
</evidence>
<evidence type="ECO:0000255" key="4">
    <source>
        <dbReference type="PROSITE-ProRule" id="PRU00723"/>
    </source>
</evidence>
<evidence type="ECO:0000256" key="5">
    <source>
        <dbReference type="SAM" id="MobiDB-lite"/>
    </source>
</evidence>
<evidence type="ECO:0000305" key="6"/>
<reference key="1">
    <citation type="journal article" date="2004" name="Science">
        <title>The Ashbya gossypii genome as a tool for mapping the ancient Saccharomyces cerevisiae genome.</title>
        <authorList>
            <person name="Dietrich F.S."/>
            <person name="Voegeli S."/>
            <person name="Brachat S."/>
            <person name="Lerch A."/>
            <person name="Gates K."/>
            <person name="Steiner S."/>
            <person name="Mohr C."/>
            <person name="Poehlmann R."/>
            <person name="Luedi P."/>
            <person name="Choi S."/>
            <person name="Wing R.A."/>
            <person name="Flavier A."/>
            <person name="Gaffney T.D."/>
            <person name="Philippsen P."/>
        </authorList>
    </citation>
    <scope>NUCLEOTIDE SEQUENCE [LARGE SCALE GENOMIC DNA]</scope>
    <source>
        <strain>ATCC 10895 / CBS 109.51 / FGSC 9923 / NRRL Y-1056</strain>
    </source>
</reference>
<reference key="2">
    <citation type="journal article" date="2013" name="G3 (Bethesda)">
        <title>Genomes of Ashbya fungi isolated from insects reveal four mating-type loci, numerous translocations, lack of transposons, and distinct gene duplications.</title>
        <authorList>
            <person name="Dietrich F.S."/>
            <person name="Voegeli S."/>
            <person name="Kuo S."/>
            <person name="Philippsen P."/>
        </authorList>
    </citation>
    <scope>GENOME REANNOTATION</scope>
    <source>
        <strain>ATCC 10895 / CBS 109.51 / FGSC 9923 / NRRL Y-1056</strain>
    </source>
</reference>
<feature type="chain" id="PRO_0000330225" description="tRNA-dihydrouridine(47) synthase [NAD(P)(+)]">
    <location>
        <begin position="1"/>
        <end position="647"/>
    </location>
</feature>
<feature type="zinc finger region" description="C3H1-type 1" evidence="4">
    <location>
        <begin position="86"/>
        <end position="116"/>
    </location>
</feature>
<feature type="zinc finger region" description="C3H1-type 2" evidence="4">
    <location>
        <begin position="122"/>
        <end position="158"/>
    </location>
</feature>
<feature type="region of interest" description="Disordered" evidence="5">
    <location>
        <begin position="1"/>
        <end position="26"/>
    </location>
</feature>
<feature type="region of interest" description="Disordered" evidence="5">
    <location>
        <begin position="47"/>
        <end position="89"/>
    </location>
</feature>
<feature type="compositionally biased region" description="Basic and acidic residues" evidence="5">
    <location>
        <begin position="7"/>
        <end position="26"/>
    </location>
</feature>
<feature type="compositionally biased region" description="Basic and acidic residues" evidence="5">
    <location>
        <begin position="55"/>
        <end position="66"/>
    </location>
</feature>
<feature type="compositionally biased region" description="Basic residues" evidence="5">
    <location>
        <begin position="67"/>
        <end position="77"/>
    </location>
</feature>
<feature type="compositionally biased region" description="Basic and acidic residues" evidence="5">
    <location>
        <begin position="78"/>
        <end position="89"/>
    </location>
</feature>
<feature type="active site" description="Proton donor" evidence="2">
    <location>
        <position position="369"/>
    </location>
</feature>
<feature type="binding site" evidence="2">
    <location>
        <begin position="281"/>
        <end position="283"/>
    </location>
    <ligand>
        <name>FMN</name>
        <dbReference type="ChEBI" id="CHEBI:58210"/>
    </ligand>
</feature>
<feature type="binding site" evidence="2">
    <location>
        <position position="336"/>
    </location>
    <ligand>
        <name>FMN</name>
        <dbReference type="ChEBI" id="CHEBI:58210"/>
    </ligand>
</feature>
<feature type="binding site" evidence="2">
    <location>
        <position position="409"/>
    </location>
    <ligand>
        <name>FMN</name>
        <dbReference type="ChEBI" id="CHEBI:58210"/>
    </ligand>
</feature>
<feature type="binding site" evidence="2">
    <location>
        <position position="440"/>
    </location>
    <ligand>
        <name>FMN</name>
        <dbReference type="ChEBI" id="CHEBI:58210"/>
    </ligand>
</feature>
<feature type="binding site" evidence="2">
    <location>
        <begin position="489"/>
        <end position="491"/>
    </location>
    <ligand>
        <name>FMN</name>
        <dbReference type="ChEBI" id="CHEBI:58210"/>
    </ligand>
</feature>
<feature type="binding site" evidence="2">
    <location>
        <begin position="513"/>
        <end position="514"/>
    </location>
    <ligand>
        <name>FMN</name>
        <dbReference type="ChEBI" id="CHEBI:58210"/>
    </ligand>
</feature>
<keyword id="KW-0963">Cytoplasm</keyword>
<keyword id="KW-0285">Flavoprotein</keyword>
<keyword id="KW-0288">FMN</keyword>
<keyword id="KW-0479">Metal-binding</keyword>
<keyword id="KW-0507">mRNA processing</keyword>
<keyword id="KW-0520">NAD</keyword>
<keyword id="KW-0521">NADP</keyword>
<keyword id="KW-0539">Nucleus</keyword>
<keyword id="KW-0560">Oxidoreductase</keyword>
<keyword id="KW-1185">Reference proteome</keyword>
<keyword id="KW-0677">Repeat</keyword>
<keyword id="KW-0819">tRNA processing</keyword>
<keyword id="KW-0862">Zinc</keyword>
<keyword id="KW-0863">Zinc-finger</keyword>
<organism>
    <name type="scientific">Eremothecium gossypii (strain ATCC 10895 / CBS 109.51 / FGSC 9923 / NRRL Y-1056)</name>
    <name type="common">Yeast</name>
    <name type="synonym">Ashbya gossypii</name>
    <dbReference type="NCBI Taxonomy" id="284811"/>
    <lineage>
        <taxon>Eukaryota</taxon>
        <taxon>Fungi</taxon>
        <taxon>Dikarya</taxon>
        <taxon>Ascomycota</taxon>
        <taxon>Saccharomycotina</taxon>
        <taxon>Saccharomycetes</taxon>
        <taxon>Saccharomycetales</taxon>
        <taxon>Saccharomycetaceae</taxon>
        <taxon>Eremothecium</taxon>
    </lineage>
</organism>
<sequence length="647" mass="73220">MSSTEGGAKRVAEDGSEVSEAKRVGRIEGVAQLKPEYVVAGAAQLRAAESDEELTSERMVEPEGGTRKKSKKARGQNKNRDNRQAKEEHQLCPRLAQGNADACAFGAQCRYLHDVRTYLEHKTAEIECPQFTGCPVFAATGRCPMGFKCRFLSSHCNMETLELATTPEDERAKLWSVNHEVNHIASDRKLDLVKRRAPFPRSEHVLEIIDAIQQEFRDEMQGAAAAPEGAVAEVPQVQQREEQLSNKRARQRELYAQYHETRYFAQEKKPLDLHHKKIVSPLTTVGNLPFRRLMRQLGADVTYSEMALAVPLIQGTNSEWALPKAHCSELPGFGVQLACSKPWQAAKAAEALADNVGDGLSEINLNSGCPIDLLYRQGSGSALLDNPARMIRCLNAMNYVSKDVPVSVKLRTGTRDGHPIALGLCKRLVMETDVAAITLHGRTRQQRYTRSADWDYVGQVADALRSYETERAEKLKDREGKLRIQFVGNGDCNNWEDWYRHLENENVDSVMVARGALIKPWIFEEVDARQYIDKSSSERLEILRDYARFSMDHWGTDEYGIALCRRYFCEFMSFFHRYVPMGICERYPVLLNERPPNWRGRDDLETLLGSTDAADWIKLSEQFFGPTPDKFVFQPKHKSNSYAPSVQ</sequence>
<accession>Q757E3</accession>
<name>DUS3_EREGS</name>
<protein>
    <recommendedName>
        <fullName>tRNA-dihydrouridine(47) synthase [NAD(P)(+)]</fullName>
        <ecNumber evidence="1">1.3.1.89</ecNumber>
    </recommendedName>
    <alternativeName>
        <fullName>mRNA-dihydrouridine synthase DUS3</fullName>
        <ecNumber evidence="3">1.3.1.-</ecNumber>
    </alternativeName>
    <alternativeName>
        <fullName>tRNA-dihydrouridine synthase 3</fullName>
    </alternativeName>
</protein>
<proteinExistence type="inferred from homology"/>
<dbReference type="EC" id="1.3.1.89" evidence="1"/>
<dbReference type="EC" id="1.3.1.-" evidence="3"/>
<dbReference type="EMBL" id="AE016818">
    <property type="protein sequence ID" value="AAS52754.1"/>
    <property type="molecule type" value="Genomic_DNA"/>
</dbReference>
<dbReference type="RefSeq" id="NP_984930.1">
    <property type="nucleotide sequence ID" value="NM_210284.1"/>
</dbReference>
<dbReference type="SMR" id="Q757E3"/>
<dbReference type="FunCoup" id="Q757E3">
    <property type="interactions" value="934"/>
</dbReference>
<dbReference type="STRING" id="284811.Q757E3"/>
<dbReference type="EnsemblFungi" id="AAS52754">
    <property type="protein sequence ID" value="AAS52754"/>
    <property type="gene ID" value="AGOS_AER070C"/>
</dbReference>
<dbReference type="GeneID" id="4621133"/>
<dbReference type="KEGG" id="ago:AGOS_AER070C"/>
<dbReference type="eggNOG" id="KOG2333">
    <property type="taxonomic scope" value="Eukaryota"/>
</dbReference>
<dbReference type="HOGENOM" id="CLU_013299_7_0_1"/>
<dbReference type="InParanoid" id="Q757E3"/>
<dbReference type="OMA" id="WSYIAEC"/>
<dbReference type="OrthoDB" id="259935at2759"/>
<dbReference type="Proteomes" id="UP000000591">
    <property type="component" value="Chromosome V"/>
</dbReference>
<dbReference type="GO" id="GO:0005737">
    <property type="term" value="C:cytoplasm"/>
    <property type="evidence" value="ECO:0007669"/>
    <property type="project" value="UniProtKB-SubCell"/>
</dbReference>
<dbReference type="GO" id="GO:0034399">
    <property type="term" value="C:nuclear periphery"/>
    <property type="evidence" value="ECO:0007669"/>
    <property type="project" value="EnsemblFungi"/>
</dbReference>
<dbReference type="GO" id="GO:0050660">
    <property type="term" value="F:flavin adenine dinucleotide binding"/>
    <property type="evidence" value="ECO:0007669"/>
    <property type="project" value="InterPro"/>
</dbReference>
<dbReference type="GO" id="GO:0106414">
    <property type="term" value="F:mRNA dihydrouridine synthase activity"/>
    <property type="evidence" value="ECO:0007669"/>
    <property type="project" value="RHEA"/>
</dbReference>
<dbReference type="GO" id="GO:0017150">
    <property type="term" value="F:tRNA dihydrouridine synthase activity"/>
    <property type="evidence" value="ECO:0000318"/>
    <property type="project" value="GO_Central"/>
</dbReference>
<dbReference type="GO" id="GO:0102265">
    <property type="term" value="F:tRNA-dihydrouridine47 synthase activity"/>
    <property type="evidence" value="ECO:0007669"/>
    <property type="project" value="UniProtKB-EC"/>
</dbReference>
<dbReference type="GO" id="GO:0008270">
    <property type="term" value="F:zinc ion binding"/>
    <property type="evidence" value="ECO:0007669"/>
    <property type="project" value="UniProtKB-KW"/>
</dbReference>
<dbReference type="GO" id="GO:0006397">
    <property type="term" value="P:mRNA processing"/>
    <property type="evidence" value="ECO:0007669"/>
    <property type="project" value="UniProtKB-KW"/>
</dbReference>
<dbReference type="CDD" id="cd02801">
    <property type="entry name" value="DUS_like_FMN"/>
    <property type="match status" value="1"/>
</dbReference>
<dbReference type="FunFam" id="3.20.20.70:FF:000145">
    <property type="entry name" value="tRNA-dihydrouridine(47) synthase [NAD(P)(+)]"/>
    <property type="match status" value="1"/>
</dbReference>
<dbReference type="FunFam" id="4.10.1000.10:FF:000029">
    <property type="entry name" value="tRNA-dihydrouridine(47) synthase [NAD(P)(+)]"/>
    <property type="match status" value="1"/>
</dbReference>
<dbReference type="Gene3D" id="3.20.20.70">
    <property type="entry name" value="Aldolase class I"/>
    <property type="match status" value="1"/>
</dbReference>
<dbReference type="Gene3D" id="4.10.1000.10">
    <property type="entry name" value="Zinc finger, CCCH-type"/>
    <property type="match status" value="1"/>
</dbReference>
<dbReference type="InterPro" id="IPR013785">
    <property type="entry name" value="Aldolase_TIM"/>
</dbReference>
<dbReference type="InterPro" id="IPR035587">
    <property type="entry name" value="DUS-like_FMN-bd"/>
</dbReference>
<dbReference type="InterPro" id="IPR018517">
    <property type="entry name" value="tRNA_hU_synthase_CS"/>
</dbReference>
<dbReference type="InterPro" id="IPR000571">
    <property type="entry name" value="Znf_CCCH"/>
</dbReference>
<dbReference type="PANTHER" id="PTHR45846">
    <property type="entry name" value="TRNA-DIHYDROURIDINE(47) SYNTHASE [NAD(P)(+)]-LIKE"/>
    <property type="match status" value="1"/>
</dbReference>
<dbReference type="PANTHER" id="PTHR45846:SF1">
    <property type="entry name" value="TRNA-DIHYDROURIDINE(47) SYNTHASE [NAD(P)(+)]-LIKE"/>
    <property type="match status" value="1"/>
</dbReference>
<dbReference type="Pfam" id="PF01207">
    <property type="entry name" value="Dus"/>
    <property type="match status" value="1"/>
</dbReference>
<dbReference type="SUPFAM" id="SSF51395">
    <property type="entry name" value="FMN-linked oxidoreductases"/>
    <property type="match status" value="1"/>
</dbReference>
<dbReference type="PROSITE" id="PS01136">
    <property type="entry name" value="UPF0034"/>
    <property type="match status" value="1"/>
</dbReference>
<dbReference type="PROSITE" id="PS50103">
    <property type="entry name" value="ZF_C3H1"/>
    <property type="match status" value="2"/>
</dbReference>
<gene>
    <name type="primary">DUS3</name>
    <name type="ordered locus">AER070C</name>
</gene>
<comment type="function">
    <text evidence="1 3">Catalyzes the synthesis of dihydrouridine, a modified base found in the D-loop of most tRNAs. Specifically modifies U47 in cytoplasmic tRNAs (By similarity). Catalyzes the synthesis of dihydrouridine in some mRNAs, thereby affecting their translation (By similarity).</text>
</comment>
<comment type="catalytic activity">
    <reaction evidence="1">
        <text>5,6-dihydrouridine(47) in tRNA + NAD(+) = uridine(47) in tRNA + NADH + H(+)</text>
        <dbReference type="Rhea" id="RHEA:53364"/>
        <dbReference type="Rhea" id="RHEA-COMP:13539"/>
        <dbReference type="Rhea" id="RHEA-COMP:13540"/>
        <dbReference type="ChEBI" id="CHEBI:15378"/>
        <dbReference type="ChEBI" id="CHEBI:57540"/>
        <dbReference type="ChEBI" id="CHEBI:57945"/>
        <dbReference type="ChEBI" id="CHEBI:65315"/>
        <dbReference type="ChEBI" id="CHEBI:74443"/>
        <dbReference type="EC" id="1.3.1.89"/>
    </reaction>
    <physiologicalReaction direction="right-to-left" evidence="1">
        <dbReference type="Rhea" id="RHEA:53366"/>
    </physiologicalReaction>
</comment>
<comment type="catalytic activity">
    <reaction evidence="1">
        <text>5,6-dihydrouridine(47) in tRNA + NADP(+) = uridine(47) in tRNA + NADPH + H(+)</text>
        <dbReference type="Rhea" id="RHEA:53360"/>
        <dbReference type="Rhea" id="RHEA-COMP:13539"/>
        <dbReference type="Rhea" id="RHEA-COMP:13540"/>
        <dbReference type="ChEBI" id="CHEBI:15378"/>
        <dbReference type="ChEBI" id="CHEBI:57783"/>
        <dbReference type="ChEBI" id="CHEBI:58349"/>
        <dbReference type="ChEBI" id="CHEBI:65315"/>
        <dbReference type="ChEBI" id="CHEBI:74443"/>
        <dbReference type="EC" id="1.3.1.89"/>
    </reaction>
    <physiologicalReaction direction="right-to-left" evidence="1">
        <dbReference type="Rhea" id="RHEA:53362"/>
    </physiologicalReaction>
</comment>
<comment type="catalytic activity">
    <reaction evidence="3">
        <text>a 5,6-dihydrouridine in mRNA + NAD(+) = a uridine in mRNA + NADH + H(+)</text>
        <dbReference type="Rhea" id="RHEA:69851"/>
        <dbReference type="Rhea" id="RHEA-COMP:14658"/>
        <dbReference type="Rhea" id="RHEA-COMP:17789"/>
        <dbReference type="ChEBI" id="CHEBI:15378"/>
        <dbReference type="ChEBI" id="CHEBI:57540"/>
        <dbReference type="ChEBI" id="CHEBI:57945"/>
        <dbReference type="ChEBI" id="CHEBI:65315"/>
        <dbReference type="ChEBI" id="CHEBI:74443"/>
    </reaction>
    <physiologicalReaction direction="right-to-left" evidence="3">
        <dbReference type="Rhea" id="RHEA:69853"/>
    </physiologicalReaction>
</comment>
<comment type="catalytic activity">
    <reaction evidence="3">
        <text>a 5,6-dihydrouridine in mRNA + NADP(+) = a uridine in mRNA + NADPH + H(+)</text>
        <dbReference type="Rhea" id="RHEA:69855"/>
        <dbReference type="Rhea" id="RHEA-COMP:14658"/>
        <dbReference type="Rhea" id="RHEA-COMP:17789"/>
        <dbReference type="ChEBI" id="CHEBI:15378"/>
        <dbReference type="ChEBI" id="CHEBI:57783"/>
        <dbReference type="ChEBI" id="CHEBI:58349"/>
        <dbReference type="ChEBI" id="CHEBI:65315"/>
        <dbReference type="ChEBI" id="CHEBI:74443"/>
    </reaction>
    <physiologicalReaction direction="right-to-left" evidence="3">
        <dbReference type="Rhea" id="RHEA:69857"/>
    </physiologicalReaction>
</comment>
<comment type="cofactor">
    <cofactor evidence="2">
        <name>FMN</name>
        <dbReference type="ChEBI" id="CHEBI:58210"/>
    </cofactor>
</comment>
<comment type="subcellular location">
    <subcellularLocation>
        <location evidence="1">Cytoplasm</location>
    </subcellularLocation>
    <subcellularLocation>
        <location evidence="1">Nucleus</location>
    </subcellularLocation>
</comment>
<comment type="similarity">
    <text evidence="6">Belongs to the Dus family. Dus3 subfamily.</text>
</comment>